<protein>
    <recommendedName>
        <fullName>Geminivirus-like replication protein</fullName>
        <ecNumber>3.1.21.-</ecNumber>
    </recommendedName>
</protein>
<keyword id="KW-0067">ATP-binding</keyword>
<keyword id="KW-0190">Covalent protein-DNA linkage</keyword>
<keyword id="KW-0235">DNA replication</keyword>
<keyword id="KW-0238">DNA-binding</keyword>
<keyword id="KW-0255">Endonuclease</keyword>
<keyword id="KW-0378">Hydrolase</keyword>
<keyword id="KW-0479">Metal-binding</keyword>
<keyword id="KW-0540">Nuclease</keyword>
<keyword id="KW-0547">Nucleotide-binding</keyword>
<keyword id="KW-0548">Nucleotidyltransferase</keyword>
<keyword id="KW-0614">Plasmid</keyword>
<keyword id="KW-0808">Transferase</keyword>
<organism>
    <name type="scientific">Onion yellows phytoplasma (strain OY-M)</name>
    <dbReference type="NCBI Taxonomy" id="262768"/>
    <lineage>
        <taxon>Bacteria</taxon>
        <taxon>Bacillati</taxon>
        <taxon>Mycoplasmatota</taxon>
        <taxon>Mollicutes</taxon>
        <taxon>Acholeplasmatales</taxon>
        <taxon>Acholeplasmataceae</taxon>
        <taxon>Candidatus Phytoplasma</taxon>
        <taxon>16SrI (Aster yellows group)</taxon>
    </lineage>
</organism>
<gene>
    <name type="primary">rep</name>
    <name type="ordered locus">PAM_780</name>
</gene>
<sequence length="434" mass="51992">MKKTNNIKKETMFQAQNIFLTYSQCDLSKEEIKTFIINLCNEKKLQINYLIIGIENHQDHKGKHHHVFFQLNKQFRTRDLTIFNIPKNIKEKKLIDHENIKIKDFFYSPHIEPRPGNPIKDTTDVRNYVKKDGDFIEEGTFKHVRYIKLSKNEKPTELESLTNNYFLKLRKEYQQKEINISKTKNEIFKKLKLYAESLEPNYAFKNAKRFKNMVFEYIFESDIKELPIFDFCTFKKIPILISIYDILETQKEQLSNSISKRFKTLIVEGNSKSGKTQFFKSVLTNLELPFNYIKDDVDFSDENYDEDKCVNIYDDIDIYDIQARNLTKVVIGNQKDSIVNMKYKPRTKIKGTDISIMLVNEDTSIEKYCFDNFKRGRKEYKYIRENAIFINLDKHTITHYEYQKYENEQAVIQHFEMPKNWDGLLYFLDQENES</sequence>
<geneLocation type="plasmid">
    <name>EcOYM</name>
</geneLocation>
<name>REPE_ONYPE</name>
<accession>P60470</accession>
<feature type="chain" id="PRO_0000222221" description="Geminivirus-like replication protein">
    <location>
        <begin position="1"/>
        <end position="434"/>
    </location>
</feature>
<feature type="domain" description="CRESS-DNA virus Rep endonuclease" evidence="3">
    <location>
        <begin position="12"/>
        <end position="141"/>
    </location>
</feature>
<feature type="short sequence motif" description="RCR-1" evidence="3">
    <location>
        <begin position="19"/>
        <end position="22"/>
    </location>
</feature>
<feature type="short sequence motif" description="RCR-2" evidence="3">
    <location>
        <begin position="64"/>
        <end position="66"/>
    </location>
</feature>
<feature type="short sequence motif" description="RCR-3" evidence="3">
    <location>
        <begin position="128"/>
        <end position="131"/>
    </location>
</feature>
<feature type="active site" description="For DNA cleavage activity" evidence="3">
    <location>
        <position position="128"/>
    </location>
</feature>
<feature type="binding site" evidence="3">
    <location>
        <position position="55"/>
    </location>
    <ligand>
        <name>a divalent metal cation</name>
        <dbReference type="ChEBI" id="CHEBI:60240"/>
    </ligand>
</feature>
<feature type="binding site" evidence="3">
    <location>
        <position position="64"/>
    </location>
    <ligand>
        <name>a divalent metal cation</name>
        <dbReference type="ChEBI" id="CHEBI:60240"/>
    </ligand>
</feature>
<feature type="binding site" evidence="3">
    <location>
        <position position="66"/>
    </location>
    <ligand>
        <name>a divalent metal cation</name>
        <dbReference type="ChEBI" id="CHEBI:60240"/>
    </ligand>
</feature>
<feature type="binding site" evidence="3">
    <location>
        <position position="132"/>
    </location>
    <ligand>
        <name>a divalent metal cation</name>
        <dbReference type="ChEBI" id="CHEBI:60240"/>
    </ligand>
</feature>
<feature type="binding site" evidence="2">
    <location>
        <begin position="269"/>
        <end position="276"/>
    </location>
    <ligand>
        <name>ATP</name>
        <dbReference type="ChEBI" id="CHEBI:30616"/>
    </ligand>
</feature>
<proteinExistence type="inferred from homology"/>
<comment type="function">
    <text evidence="1">Introduces an endonucleolytic nick, thereby initiating the rolling circle replication (RCR).</text>
</comment>
<comment type="cofactor">
    <cofactor evidence="3">
        <name>Mg(2+)</name>
        <dbReference type="ChEBI" id="CHEBI:18420"/>
    </cofactor>
    <cofactor evidence="3">
        <name>Mn(2+)</name>
        <dbReference type="ChEBI" id="CHEBI:29035"/>
    </cofactor>
    <text evidence="3">Divalent metal cations, possibly Mg(2+) or Mn(2+).</text>
</comment>
<comment type="domain">
    <text>There are 3 rolling circle replication (RCR) motifs. RCR-2 may be involved in metal coordination. RCR-3 is required for phosphodiester bond cleavage for initiation of RCR.</text>
</comment>
<comment type="similarity">
    <text evidence="4">Belongs to the geminiviridae Rep protein family.</text>
</comment>
<reference key="1">
    <citation type="journal article" date="2002" name="Microbiology">
        <title>Evidence of intermolecular recombination between extrachromosomal DNAs in phytoplasma: a trigger for the biological diversity of phytoplasma?</title>
        <authorList>
            <person name="Nishigawa H."/>
            <person name="Oshima K."/>
            <person name="Kakizawa S."/>
            <person name="Jung H.Y."/>
            <person name="Kuboyama T."/>
            <person name="Miyata S."/>
            <person name="Ugaki M."/>
            <person name="Namba S."/>
        </authorList>
    </citation>
    <scope>NUCLEOTIDE SEQUENCE [LARGE SCALE GENOMIC DNA]</scope>
    <source>
        <strain>OY-M</strain>
    </source>
</reference>
<evidence type="ECO:0000250" key="1"/>
<evidence type="ECO:0000255" key="2"/>
<evidence type="ECO:0000255" key="3">
    <source>
        <dbReference type="PROSITE-ProRule" id="PRU01364"/>
    </source>
</evidence>
<evidence type="ECO:0000305" key="4"/>
<dbReference type="EC" id="3.1.21.-"/>
<dbReference type="EMBL" id="AB076263">
    <property type="protein sequence ID" value="BAD04084.1"/>
    <property type="molecule type" value="Genomic_DNA"/>
</dbReference>
<dbReference type="RefSeq" id="YP_006959585.1">
    <property type="nucleotide sequence ID" value="NC_019167.1"/>
</dbReference>
<dbReference type="RefSeq" id="YP_006959591.1">
    <property type="nucleotide sequence ID" value="NC_019168.1"/>
</dbReference>
<dbReference type="RefSeq" id="YP_006959597.1">
    <property type="nucleotide sequence ID" value="NC_019169.1"/>
</dbReference>
<dbReference type="SMR" id="P60470"/>
<dbReference type="Proteomes" id="UP000002523">
    <property type="component" value="Plasmid EcOYM"/>
</dbReference>
<dbReference type="GO" id="GO:0005524">
    <property type="term" value="F:ATP binding"/>
    <property type="evidence" value="ECO:0007669"/>
    <property type="project" value="UniProtKB-KW"/>
</dbReference>
<dbReference type="GO" id="GO:0003677">
    <property type="term" value="F:DNA binding"/>
    <property type="evidence" value="ECO:0007669"/>
    <property type="project" value="UniProtKB-KW"/>
</dbReference>
<dbReference type="GO" id="GO:0004519">
    <property type="term" value="F:endonuclease activity"/>
    <property type="evidence" value="ECO:0007669"/>
    <property type="project" value="UniProtKB-KW"/>
</dbReference>
<dbReference type="GO" id="GO:0046872">
    <property type="term" value="F:metal ion binding"/>
    <property type="evidence" value="ECO:0007669"/>
    <property type="project" value="UniProtKB-KW"/>
</dbReference>
<dbReference type="GO" id="GO:0016779">
    <property type="term" value="F:nucleotidyltransferase activity"/>
    <property type="evidence" value="ECO:0007669"/>
    <property type="project" value="UniProtKB-KW"/>
</dbReference>
<dbReference type="GO" id="GO:0006260">
    <property type="term" value="P:DNA replication"/>
    <property type="evidence" value="ECO:0007669"/>
    <property type="project" value="UniProtKB-KW"/>
</dbReference>
<dbReference type="Gene3D" id="3.40.1310.20">
    <property type="match status" value="1"/>
</dbReference>
<dbReference type="InterPro" id="IPR049912">
    <property type="entry name" value="CRESS_DNA_REP"/>
</dbReference>
<dbReference type="InterPro" id="IPR027417">
    <property type="entry name" value="P-loop_NTPase"/>
</dbReference>
<dbReference type="Pfam" id="PF00799">
    <property type="entry name" value="Gemini_AL1"/>
    <property type="match status" value="1"/>
</dbReference>
<dbReference type="SUPFAM" id="SSF55464">
    <property type="entry name" value="Origin of replication-binding domain, RBD-like"/>
    <property type="match status" value="1"/>
</dbReference>
<dbReference type="SUPFAM" id="SSF52540">
    <property type="entry name" value="P-loop containing nucleoside triphosphate hydrolases"/>
    <property type="match status" value="1"/>
</dbReference>
<dbReference type="PROSITE" id="PS52020">
    <property type="entry name" value="CRESS_DNA_REP"/>
    <property type="match status" value="1"/>
</dbReference>